<proteinExistence type="inferred from homology"/>
<name>GRPE_ACIB3</name>
<protein>
    <recommendedName>
        <fullName evidence="1">Protein GrpE</fullName>
    </recommendedName>
    <alternativeName>
        <fullName evidence="1">HSP-70 cofactor</fullName>
    </alternativeName>
</protein>
<reference key="1">
    <citation type="journal article" date="2008" name="J. Bacteriol.">
        <title>Comparative genome sequence analysis of multidrug-resistant Acinetobacter baumannii.</title>
        <authorList>
            <person name="Adams M.D."/>
            <person name="Goglin K."/>
            <person name="Molyneaux N."/>
            <person name="Hujer K.M."/>
            <person name="Lavender H."/>
            <person name="Jamison J.J."/>
            <person name="MacDonald I.J."/>
            <person name="Martin K.M."/>
            <person name="Russo T."/>
            <person name="Campagnari A.A."/>
            <person name="Hujer A.M."/>
            <person name="Bonomo R.A."/>
            <person name="Gill S.R."/>
        </authorList>
    </citation>
    <scope>NUCLEOTIDE SEQUENCE [LARGE SCALE GENOMIC DNA]</scope>
    <source>
        <strain>AB307-0294</strain>
    </source>
</reference>
<sequence>MANEQNEQAQDIQNEQVEQSNEQTQAEGVEQANDVTVESLQAQITKLEENLKLEKARTANAVYEAQKSVERIQRESEKHKETVLEKFAKELLDSVDNLERAIQAAGDEETPVLEGVKLTLKSLLTTLEKFGVVEADTQNGFNADLHQAVGIDPNAKANEIGTVLQKGYTLNGRLLRPAMVMVGQ</sequence>
<keyword id="KW-0143">Chaperone</keyword>
<keyword id="KW-0963">Cytoplasm</keyword>
<keyword id="KW-0346">Stress response</keyword>
<evidence type="ECO:0000255" key="1">
    <source>
        <dbReference type="HAMAP-Rule" id="MF_01151"/>
    </source>
</evidence>
<evidence type="ECO:0000256" key="2">
    <source>
        <dbReference type="SAM" id="MobiDB-lite"/>
    </source>
</evidence>
<feature type="chain" id="PRO_1000137522" description="Protein GrpE">
    <location>
        <begin position="1"/>
        <end position="184"/>
    </location>
</feature>
<feature type="region of interest" description="Disordered" evidence="2">
    <location>
        <begin position="1"/>
        <end position="34"/>
    </location>
</feature>
<feature type="compositionally biased region" description="Polar residues" evidence="2">
    <location>
        <begin position="1"/>
        <end position="26"/>
    </location>
</feature>
<dbReference type="EMBL" id="CP001172">
    <property type="protein sequence ID" value="ACJ56733.1"/>
    <property type="molecule type" value="Genomic_DNA"/>
</dbReference>
<dbReference type="RefSeq" id="WP_001262789.1">
    <property type="nucleotide sequence ID" value="NZ_CP001172.1"/>
</dbReference>
<dbReference type="SMR" id="B7H316"/>
<dbReference type="GeneID" id="92891967"/>
<dbReference type="HOGENOM" id="CLU_057217_6_0_6"/>
<dbReference type="Proteomes" id="UP000006924">
    <property type="component" value="Chromosome"/>
</dbReference>
<dbReference type="GO" id="GO:0005829">
    <property type="term" value="C:cytosol"/>
    <property type="evidence" value="ECO:0007669"/>
    <property type="project" value="TreeGrafter"/>
</dbReference>
<dbReference type="GO" id="GO:0000774">
    <property type="term" value="F:adenyl-nucleotide exchange factor activity"/>
    <property type="evidence" value="ECO:0007669"/>
    <property type="project" value="InterPro"/>
</dbReference>
<dbReference type="GO" id="GO:0042803">
    <property type="term" value="F:protein homodimerization activity"/>
    <property type="evidence" value="ECO:0007669"/>
    <property type="project" value="InterPro"/>
</dbReference>
<dbReference type="GO" id="GO:0051087">
    <property type="term" value="F:protein-folding chaperone binding"/>
    <property type="evidence" value="ECO:0007669"/>
    <property type="project" value="InterPro"/>
</dbReference>
<dbReference type="GO" id="GO:0051082">
    <property type="term" value="F:unfolded protein binding"/>
    <property type="evidence" value="ECO:0007669"/>
    <property type="project" value="TreeGrafter"/>
</dbReference>
<dbReference type="GO" id="GO:0006457">
    <property type="term" value="P:protein folding"/>
    <property type="evidence" value="ECO:0007669"/>
    <property type="project" value="InterPro"/>
</dbReference>
<dbReference type="CDD" id="cd00446">
    <property type="entry name" value="GrpE"/>
    <property type="match status" value="1"/>
</dbReference>
<dbReference type="Gene3D" id="3.90.20.20">
    <property type="match status" value="1"/>
</dbReference>
<dbReference type="Gene3D" id="2.30.22.10">
    <property type="entry name" value="Head domain of nucleotide exchange factor GrpE"/>
    <property type="match status" value="1"/>
</dbReference>
<dbReference type="HAMAP" id="MF_01151">
    <property type="entry name" value="GrpE"/>
    <property type="match status" value="1"/>
</dbReference>
<dbReference type="InterPro" id="IPR000740">
    <property type="entry name" value="GrpE"/>
</dbReference>
<dbReference type="InterPro" id="IPR013805">
    <property type="entry name" value="GrpE_coiled_coil"/>
</dbReference>
<dbReference type="InterPro" id="IPR009012">
    <property type="entry name" value="GrpE_head"/>
</dbReference>
<dbReference type="PANTHER" id="PTHR21237">
    <property type="entry name" value="GRPE PROTEIN"/>
    <property type="match status" value="1"/>
</dbReference>
<dbReference type="PANTHER" id="PTHR21237:SF23">
    <property type="entry name" value="GRPE PROTEIN HOMOLOG, MITOCHONDRIAL"/>
    <property type="match status" value="1"/>
</dbReference>
<dbReference type="Pfam" id="PF01025">
    <property type="entry name" value="GrpE"/>
    <property type="match status" value="1"/>
</dbReference>
<dbReference type="PRINTS" id="PR00773">
    <property type="entry name" value="GRPEPROTEIN"/>
</dbReference>
<dbReference type="SUPFAM" id="SSF58014">
    <property type="entry name" value="Coiled-coil domain of nucleotide exchange factor GrpE"/>
    <property type="match status" value="1"/>
</dbReference>
<dbReference type="SUPFAM" id="SSF51064">
    <property type="entry name" value="Head domain of nucleotide exchange factor GrpE"/>
    <property type="match status" value="1"/>
</dbReference>
<dbReference type="PROSITE" id="PS01071">
    <property type="entry name" value="GRPE"/>
    <property type="match status" value="1"/>
</dbReference>
<comment type="function">
    <text evidence="1">Participates actively in the response to hyperosmotic and heat shock by preventing the aggregation of stress-denatured proteins, in association with DnaK and GrpE. It is the nucleotide exchange factor for DnaK and may function as a thermosensor. Unfolded proteins bind initially to DnaJ; upon interaction with the DnaJ-bound protein, DnaK hydrolyzes its bound ATP, resulting in the formation of a stable complex. GrpE releases ADP from DnaK; ATP binding to DnaK triggers the release of the substrate protein, thus completing the reaction cycle. Several rounds of ATP-dependent interactions between DnaJ, DnaK and GrpE are required for fully efficient folding.</text>
</comment>
<comment type="subunit">
    <text evidence="1">Homodimer.</text>
</comment>
<comment type="subcellular location">
    <subcellularLocation>
        <location evidence="1">Cytoplasm</location>
    </subcellularLocation>
</comment>
<comment type="similarity">
    <text evidence="1">Belongs to the GrpE family.</text>
</comment>
<gene>
    <name evidence="1" type="primary">grpE</name>
    <name type="ordered locus">ABBFA_003504</name>
</gene>
<accession>B7H316</accession>
<organism>
    <name type="scientific">Acinetobacter baumannii (strain AB307-0294)</name>
    <dbReference type="NCBI Taxonomy" id="557600"/>
    <lineage>
        <taxon>Bacteria</taxon>
        <taxon>Pseudomonadati</taxon>
        <taxon>Pseudomonadota</taxon>
        <taxon>Gammaproteobacteria</taxon>
        <taxon>Moraxellales</taxon>
        <taxon>Moraxellaceae</taxon>
        <taxon>Acinetobacter</taxon>
        <taxon>Acinetobacter calcoaceticus/baumannii complex</taxon>
    </lineage>
</organism>